<organism>
    <name type="scientific">Prosthecochloris aestuarii (strain DSM 271 / SK 413)</name>
    <dbReference type="NCBI Taxonomy" id="290512"/>
    <lineage>
        <taxon>Bacteria</taxon>
        <taxon>Pseudomonadati</taxon>
        <taxon>Chlorobiota</taxon>
        <taxon>Chlorobiia</taxon>
        <taxon>Chlorobiales</taxon>
        <taxon>Chlorobiaceae</taxon>
        <taxon>Prosthecochloris</taxon>
    </lineage>
</organism>
<reference key="1">
    <citation type="submission" date="2008-06" db="EMBL/GenBank/DDBJ databases">
        <title>Complete sequence of chromosome of Prosthecochloris aestuarii DSM 271.</title>
        <authorList>
            <consortium name="US DOE Joint Genome Institute"/>
            <person name="Lucas S."/>
            <person name="Copeland A."/>
            <person name="Lapidus A."/>
            <person name="Glavina del Rio T."/>
            <person name="Dalin E."/>
            <person name="Tice H."/>
            <person name="Bruce D."/>
            <person name="Goodwin L."/>
            <person name="Pitluck S."/>
            <person name="Schmutz J."/>
            <person name="Larimer F."/>
            <person name="Land M."/>
            <person name="Hauser L."/>
            <person name="Kyrpides N."/>
            <person name="Anderson I."/>
            <person name="Liu Z."/>
            <person name="Li T."/>
            <person name="Zhao F."/>
            <person name="Overmann J."/>
            <person name="Bryant D.A."/>
            <person name="Richardson P."/>
        </authorList>
    </citation>
    <scope>NUCLEOTIDE SEQUENCE [LARGE SCALE GENOMIC DNA]</scope>
    <source>
        <strain>DSM 271 / SK 413</strain>
    </source>
</reference>
<proteinExistence type="inferred from homology"/>
<name>RL15_PROA2</name>
<sequence>MDLSSLSPAKGSVKNKKRVGRGQGSGNGTTAGKGNKGQQSRSGYKRPVSEGGQMPLYRRLPKFGFTKPNRKSVIGVNLSQIAKWIEDGRVSSEVGVEDFKQLCNASKSDYFKVLGNGELGTAVKITAHFVSKSAEEKIKQAGGEVILAERTLLEAERVRDLSTDEALLKPKAKLRKFKKQSKSS</sequence>
<gene>
    <name evidence="1" type="primary">rplO</name>
    <name type="ordered locus">Paes_2045</name>
</gene>
<dbReference type="EMBL" id="CP001108">
    <property type="protein sequence ID" value="ACF47055.1"/>
    <property type="molecule type" value="Genomic_DNA"/>
</dbReference>
<dbReference type="RefSeq" id="WP_012506587.1">
    <property type="nucleotide sequence ID" value="NC_011059.1"/>
</dbReference>
<dbReference type="SMR" id="B4S5A9"/>
<dbReference type="STRING" id="290512.Paes_2045"/>
<dbReference type="KEGG" id="paa:Paes_2045"/>
<dbReference type="eggNOG" id="COG0200">
    <property type="taxonomic scope" value="Bacteria"/>
</dbReference>
<dbReference type="HOGENOM" id="CLU_055188_4_0_10"/>
<dbReference type="Proteomes" id="UP000002725">
    <property type="component" value="Chromosome"/>
</dbReference>
<dbReference type="GO" id="GO:0022625">
    <property type="term" value="C:cytosolic large ribosomal subunit"/>
    <property type="evidence" value="ECO:0007669"/>
    <property type="project" value="TreeGrafter"/>
</dbReference>
<dbReference type="GO" id="GO:0019843">
    <property type="term" value="F:rRNA binding"/>
    <property type="evidence" value="ECO:0007669"/>
    <property type="project" value="UniProtKB-UniRule"/>
</dbReference>
<dbReference type="GO" id="GO:0003735">
    <property type="term" value="F:structural constituent of ribosome"/>
    <property type="evidence" value="ECO:0007669"/>
    <property type="project" value="InterPro"/>
</dbReference>
<dbReference type="GO" id="GO:0006412">
    <property type="term" value="P:translation"/>
    <property type="evidence" value="ECO:0007669"/>
    <property type="project" value="UniProtKB-UniRule"/>
</dbReference>
<dbReference type="Gene3D" id="3.100.10.10">
    <property type="match status" value="1"/>
</dbReference>
<dbReference type="HAMAP" id="MF_01341">
    <property type="entry name" value="Ribosomal_uL15"/>
    <property type="match status" value="1"/>
</dbReference>
<dbReference type="InterPro" id="IPR030878">
    <property type="entry name" value="Ribosomal_uL15"/>
</dbReference>
<dbReference type="InterPro" id="IPR021131">
    <property type="entry name" value="Ribosomal_uL15/eL18"/>
</dbReference>
<dbReference type="InterPro" id="IPR036227">
    <property type="entry name" value="Ribosomal_uL15/eL18_sf"/>
</dbReference>
<dbReference type="InterPro" id="IPR005749">
    <property type="entry name" value="Ribosomal_uL15_bac-type"/>
</dbReference>
<dbReference type="InterPro" id="IPR001196">
    <property type="entry name" value="Ribosomal_uL15_CS"/>
</dbReference>
<dbReference type="NCBIfam" id="TIGR01071">
    <property type="entry name" value="rplO_bact"/>
    <property type="match status" value="1"/>
</dbReference>
<dbReference type="PANTHER" id="PTHR12934">
    <property type="entry name" value="50S RIBOSOMAL PROTEIN L15"/>
    <property type="match status" value="1"/>
</dbReference>
<dbReference type="PANTHER" id="PTHR12934:SF11">
    <property type="entry name" value="LARGE RIBOSOMAL SUBUNIT PROTEIN UL15M"/>
    <property type="match status" value="1"/>
</dbReference>
<dbReference type="Pfam" id="PF00828">
    <property type="entry name" value="Ribosomal_L27A"/>
    <property type="match status" value="1"/>
</dbReference>
<dbReference type="SUPFAM" id="SSF52080">
    <property type="entry name" value="Ribosomal proteins L15p and L18e"/>
    <property type="match status" value="1"/>
</dbReference>
<dbReference type="PROSITE" id="PS00475">
    <property type="entry name" value="RIBOSOMAL_L15"/>
    <property type="match status" value="1"/>
</dbReference>
<comment type="function">
    <text evidence="1">Binds to the 23S rRNA.</text>
</comment>
<comment type="subunit">
    <text evidence="1">Part of the 50S ribosomal subunit.</text>
</comment>
<comment type="similarity">
    <text evidence="1">Belongs to the universal ribosomal protein uL15 family.</text>
</comment>
<evidence type="ECO:0000255" key="1">
    <source>
        <dbReference type="HAMAP-Rule" id="MF_01341"/>
    </source>
</evidence>
<evidence type="ECO:0000256" key="2">
    <source>
        <dbReference type="SAM" id="MobiDB-lite"/>
    </source>
</evidence>
<evidence type="ECO:0000305" key="3"/>
<feature type="chain" id="PRO_1000142860" description="Large ribosomal subunit protein uL15">
    <location>
        <begin position="1"/>
        <end position="184"/>
    </location>
</feature>
<feature type="region of interest" description="Disordered" evidence="2">
    <location>
        <begin position="1"/>
        <end position="55"/>
    </location>
</feature>
<feature type="compositionally biased region" description="Gly residues" evidence="2">
    <location>
        <begin position="21"/>
        <end position="35"/>
    </location>
</feature>
<protein>
    <recommendedName>
        <fullName evidence="1">Large ribosomal subunit protein uL15</fullName>
    </recommendedName>
    <alternativeName>
        <fullName evidence="3">50S ribosomal protein L15</fullName>
    </alternativeName>
</protein>
<keyword id="KW-0687">Ribonucleoprotein</keyword>
<keyword id="KW-0689">Ribosomal protein</keyword>
<keyword id="KW-0694">RNA-binding</keyword>
<keyword id="KW-0699">rRNA-binding</keyword>
<accession>B4S5A9</accession>